<sequence>MFLAQEIIRKKRNGDVLSTAEIQFFVDGITHNTVSEGQIAAFGMAVYFKDMNMDERIALTIAMRDSGTVLNWDSLGLNGPIIDKHSTGGVGDVISLMLGPMAAACGGYVPMISGRGLGHTGGTLDKFDAIPGYQTEPSSELFRKVVKDAGVAIIGQTGDLVPADKRFYSIRDNTATVESISLITASILSKKLAAGLDALAMDVKVGSGAFMPTYEASEELARSITAVANGAGTKTTALLTDMNQVLASCAGNAVEVREAINFLTGQYRNPRLYAVTMGLCAEMLILGGIAQNEAEARHKLNTVLDNGKAAEAFAKMVSGLGGPTDFVEAYDKYLPHAKIVRPVYANTSGFAYKMDTRELGLAVVTLGGGRRKPGDALDYSVGLTQVCALGQEVNKDVPLAMIHAQSEDAFAEAAAAIQQAIIIGDSAPEKTPEIYRYIRASDL</sequence>
<protein>
    <recommendedName>
        <fullName evidence="1">Thymidine phosphorylase</fullName>
        <ecNumber evidence="1">2.4.2.4</ecNumber>
    </recommendedName>
    <alternativeName>
        <fullName evidence="1">TdRPase</fullName>
    </alternativeName>
</protein>
<proteinExistence type="inferred from homology"/>
<organism>
    <name type="scientific">Shewanella frigidimarina (strain NCIMB 400)</name>
    <dbReference type="NCBI Taxonomy" id="318167"/>
    <lineage>
        <taxon>Bacteria</taxon>
        <taxon>Pseudomonadati</taxon>
        <taxon>Pseudomonadota</taxon>
        <taxon>Gammaproteobacteria</taxon>
        <taxon>Alteromonadales</taxon>
        <taxon>Shewanellaceae</taxon>
        <taxon>Shewanella</taxon>
    </lineage>
</organism>
<name>TYPH_SHEFN</name>
<comment type="function">
    <text evidence="1">The enzymes which catalyze the reversible phosphorolysis of pyrimidine nucleosides are involved in the degradation of these compounds and in their utilization as carbon and energy sources, or in the rescue of pyrimidine bases for nucleotide synthesis.</text>
</comment>
<comment type="catalytic activity">
    <reaction evidence="1">
        <text>thymidine + phosphate = 2-deoxy-alpha-D-ribose 1-phosphate + thymine</text>
        <dbReference type="Rhea" id="RHEA:16037"/>
        <dbReference type="ChEBI" id="CHEBI:17748"/>
        <dbReference type="ChEBI" id="CHEBI:17821"/>
        <dbReference type="ChEBI" id="CHEBI:43474"/>
        <dbReference type="ChEBI" id="CHEBI:57259"/>
        <dbReference type="EC" id="2.4.2.4"/>
    </reaction>
</comment>
<comment type="pathway">
    <text evidence="1">Pyrimidine metabolism; dTMP biosynthesis via salvage pathway; dTMP from thymine: step 1/2.</text>
</comment>
<comment type="subunit">
    <text evidence="1">Homodimer.</text>
</comment>
<comment type="similarity">
    <text evidence="1">Belongs to the thymidine/pyrimidine-nucleoside phosphorylase family.</text>
</comment>
<feature type="chain" id="PRO_1000069669" description="Thymidine phosphorylase">
    <location>
        <begin position="1"/>
        <end position="443"/>
    </location>
</feature>
<evidence type="ECO:0000255" key="1">
    <source>
        <dbReference type="HAMAP-Rule" id="MF_01628"/>
    </source>
</evidence>
<accession>Q086F9</accession>
<dbReference type="EC" id="2.4.2.4" evidence="1"/>
<dbReference type="EMBL" id="CP000447">
    <property type="protein sequence ID" value="ABI70856.1"/>
    <property type="molecule type" value="Genomic_DNA"/>
</dbReference>
<dbReference type="RefSeq" id="WP_011636477.1">
    <property type="nucleotide sequence ID" value="NC_008345.1"/>
</dbReference>
<dbReference type="SMR" id="Q086F9"/>
<dbReference type="STRING" id="318167.Sfri_1003"/>
<dbReference type="KEGG" id="sfr:Sfri_1003"/>
<dbReference type="eggNOG" id="COG0213">
    <property type="taxonomic scope" value="Bacteria"/>
</dbReference>
<dbReference type="HOGENOM" id="CLU_025040_0_1_6"/>
<dbReference type="OrthoDB" id="9763887at2"/>
<dbReference type="UniPathway" id="UPA00578">
    <property type="reaction ID" value="UER00638"/>
</dbReference>
<dbReference type="Proteomes" id="UP000000684">
    <property type="component" value="Chromosome"/>
</dbReference>
<dbReference type="GO" id="GO:0005829">
    <property type="term" value="C:cytosol"/>
    <property type="evidence" value="ECO:0007669"/>
    <property type="project" value="TreeGrafter"/>
</dbReference>
<dbReference type="GO" id="GO:0004645">
    <property type="term" value="F:1,4-alpha-oligoglucan phosphorylase activity"/>
    <property type="evidence" value="ECO:0007669"/>
    <property type="project" value="InterPro"/>
</dbReference>
<dbReference type="GO" id="GO:0009032">
    <property type="term" value="F:thymidine phosphorylase activity"/>
    <property type="evidence" value="ECO:0007669"/>
    <property type="project" value="UniProtKB-UniRule"/>
</dbReference>
<dbReference type="GO" id="GO:0006206">
    <property type="term" value="P:pyrimidine nucleobase metabolic process"/>
    <property type="evidence" value="ECO:0007669"/>
    <property type="project" value="InterPro"/>
</dbReference>
<dbReference type="GO" id="GO:0046104">
    <property type="term" value="P:thymidine metabolic process"/>
    <property type="evidence" value="ECO:0007669"/>
    <property type="project" value="UniProtKB-UniRule"/>
</dbReference>
<dbReference type="FunFam" id="3.40.1030.10:FF:000001">
    <property type="entry name" value="Thymidine phosphorylase"/>
    <property type="match status" value="1"/>
</dbReference>
<dbReference type="FunFam" id="3.90.1170.30:FF:000001">
    <property type="entry name" value="Thymidine phosphorylase"/>
    <property type="match status" value="1"/>
</dbReference>
<dbReference type="Gene3D" id="3.40.1030.10">
    <property type="entry name" value="Nucleoside phosphorylase/phosphoribosyltransferase catalytic domain"/>
    <property type="match status" value="1"/>
</dbReference>
<dbReference type="Gene3D" id="3.90.1170.30">
    <property type="entry name" value="Pyrimidine nucleoside phosphorylase-like, C-terminal domain"/>
    <property type="match status" value="1"/>
</dbReference>
<dbReference type="Gene3D" id="1.20.970.10">
    <property type="entry name" value="Transferase, Pyrimidine Nucleoside Phosphorylase, Chain C"/>
    <property type="match status" value="1"/>
</dbReference>
<dbReference type="HAMAP" id="MF_01628">
    <property type="entry name" value="Thymid_phosp"/>
    <property type="match status" value="1"/>
</dbReference>
<dbReference type="InterPro" id="IPR000312">
    <property type="entry name" value="Glycosyl_Trfase_fam3"/>
</dbReference>
<dbReference type="InterPro" id="IPR017459">
    <property type="entry name" value="Glycosyl_Trfase_fam3_N_dom"/>
</dbReference>
<dbReference type="InterPro" id="IPR036320">
    <property type="entry name" value="Glycosyl_Trfase_fam3_N_dom_sf"/>
</dbReference>
<dbReference type="InterPro" id="IPR035902">
    <property type="entry name" value="Nuc_phospho_transferase"/>
</dbReference>
<dbReference type="InterPro" id="IPR036566">
    <property type="entry name" value="PYNP-like_C_sf"/>
</dbReference>
<dbReference type="InterPro" id="IPR013102">
    <property type="entry name" value="PYNP_C"/>
</dbReference>
<dbReference type="InterPro" id="IPR018090">
    <property type="entry name" value="Pyrmidine_PPas_bac/euk"/>
</dbReference>
<dbReference type="InterPro" id="IPR017872">
    <property type="entry name" value="Pyrmidine_PPase_CS"/>
</dbReference>
<dbReference type="InterPro" id="IPR000053">
    <property type="entry name" value="Thymidine/pyrmidine_PPase"/>
</dbReference>
<dbReference type="InterPro" id="IPR013465">
    <property type="entry name" value="Thymidine_Pase"/>
</dbReference>
<dbReference type="NCBIfam" id="NF004490">
    <property type="entry name" value="PRK05820.1"/>
    <property type="match status" value="1"/>
</dbReference>
<dbReference type="NCBIfam" id="TIGR02643">
    <property type="entry name" value="T_phosphoryl"/>
    <property type="match status" value="1"/>
</dbReference>
<dbReference type="NCBIfam" id="TIGR02644">
    <property type="entry name" value="Y_phosphoryl"/>
    <property type="match status" value="1"/>
</dbReference>
<dbReference type="PANTHER" id="PTHR10515">
    <property type="entry name" value="THYMIDINE PHOSPHORYLASE"/>
    <property type="match status" value="1"/>
</dbReference>
<dbReference type="PANTHER" id="PTHR10515:SF0">
    <property type="entry name" value="THYMIDINE PHOSPHORYLASE"/>
    <property type="match status" value="1"/>
</dbReference>
<dbReference type="Pfam" id="PF02885">
    <property type="entry name" value="Glycos_trans_3N"/>
    <property type="match status" value="1"/>
</dbReference>
<dbReference type="Pfam" id="PF00591">
    <property type="entry name" value="Glycos_transf_3"/>
    <property type="match status" value="1"/>
</dbReference>
<dbReference type="Pfam" id="PF07831">
    <property type="entry name" value="PYNP_C"/>
    <property type="match status" value="1"/>
</dbReference>
<dbReference type="PIRSF" id="PIRSF000478">
    <property type="entry name" value="TP_PyNP"/>
    <property type="match status" value="1"/>
</dbReference>
<dbReference type="SMART" id="SM00941">
    <property type="entry name" value="PYNP_C"/>
    <property type="match status" value="1"/>
</dbReference>
<dbReference type="SUPFAM" id="SSF52418">
    <property type="entry name" value="Nucleoside phosphorylase/phosphoribosyltransferase catalytic domain"/>
    <property type="match status" value="1"/>
</dbReference>
<dbReference type="SUPFAM" id="SSF47648">
    <property type="entry name" value="Nucleoside phosphorylase/phosphoribosyltransferase N-terminal domain"/>
    <property type="match status" value="1"/>
</dbReference>
<dbReference type="SUPFAM" id="SSF54680">
    <property type="entry name" value="Pyrimidine nucleoside phosphorylase C-terminal domain"/>
    <property type="match status" value="1"/>
</dbReference>
<dbReference type="PROSITE" id="PS00647">
    <property type="entry name" value="THYMID_PHOSPHORYLASE"/>
    <property type="match status" value="1"/>
</dbReference>
<gene>
    <name evidence="1" type="primary">deoA</name>
    <name type="ordered locus">Sfri_1003</name>
</gene>
<keyword id="KW-0328">Glycosyltransferase</keyword>
<keyword id="KW-1185">Reference proteome</keyword>
<keyword id="KW-0808">Transferase</keyword>
<reference key="1">
    <citation type="submission" date="2006-08" db="EMBL/GenBank/DDBJ databases">
        <title>Complete sequence of Shewanella frigidimarina NCIMB 400.</title>
        <authorList>
            <consortium name="US DOE Joint Genome Institute"/>
            <person name="Copeland A."/>
            <person name="Lucas S."/>
            <person name="Lapidus A."/>
            <person name="Barry K."/>
            <person name="Detter J.C."/>
            <person name="Glavina del Rio T."/>
            <person name="Hammon N."/>
            <person name="Israni S."/>
            <person name="Dalin E."/>
            <person name="Tice H."/>
            <person name="Pitluck S."/>
            <person name="Fredrickson J.K."/>
            <person name="Kolker E."/>
            <person name="McCuel L.A."/>
            <person name="DiChristina T."/>
            <person name="Nealson K.H."/>
            <person name="Newman D."/>
            <person name="Tiedje J.M."/>
            <person name="Zhou J."/>
            <person name="Romine M.F."/>
            <person name="Culley D.E."/>
            <person name="Serres M."/>
            <person name="Chertkov O."/>
            <person name="Brettin T."/>
            <person name="Bruce D."/>
            <person name="Han C."/>
            <person name="Tapia R."/>
            <person name="Gilna P."/>
            <person name="Schmutz J."/>
            <person name="Larimer F."/>
            <person name="Land M."/>
            <person name="Hauser L."/>
            <person name="Kyrpides N."/>
            <person name="Mikhailova N."/>
            <person name="Richardson P."/>
        </authorList>
    </citation>
    <scope>NUCLEOTIDE SEQUENCE [LARGE SCALE GENOMIC DNA]</scope>
    <source>
        <strain>NCIMB 400</strain>
    </source>
</reference>